<evidence type="ECO:0000255" key="1">
    <source>
        <dbReference type="HAMAP-Rule" id="MF_01694"/>
    </source>
</evidence>
<evidence type="ECO:0000255" key="2">
    <source>
        <dbReference type="PROSITE-ProRule" id="PRU01266"/>
    </source>
</evidence>
<name>BIOB_MYCPA</name>
<comment type="function">
    <text evidence="1">Catalyzes the conversion of dethiobiotin (DTB) to biotin by the insertion of a sulfur atom into dethiobiotin via a radical-based mechanism.</text>
</comment>
<comment type="catalytic activity">
    <reaction evidence="1">
        <text>(4R,5S)-dethiobiotin + (sulfur carrier)-SH + 2 reduced [2Fe-2S]-[ferredoxin] + 2 S-adenosyl-L-methionine = (sulfur carrier)-H + biotin + 2 5'-deoxyadenosine + 2 L-methionine + 2 oxidized [2Fe-2S]-[ferredoxin]</text>
        <dbReference type="Rhea" id="RHEA:22060"/>
        <dbReference type="Rhea" id="RHEA-COMP:10000"/>
        <dbReference type="Rhea" id="RHEA-COMP:10001"/>
        <dbReference type="Rhea" id="RHEA-COMP:14737"/>
        <dbReference type="Rhea" id="RHEA-COMP:14739"/>
        <dbReference type="ChEBI" id="CHEBI:17319"/>
        <dbReference type="ChEBI" id="CHEBI:29917"/>
        <dbReference type="ChEBI" id="CHEBI:33737"/>
        <dbReference type="ChEBI" id="CHEBI:33738"/>
        <dbReference type="ChEBI" id="CHEBI:57586"/>
        <dbReference type="ChEBI" id="CHEBI:57844"/>
        <dbReference type="ChEBI" id="CHEBI:59789"/>
        <dbReference type="ChEBI" id="CHEBI:64428"/>
        <dbReference type="ChEBI" id="CHEBI:149473"/>
        <dbReference type="EC" id="2.8.1.6"/>
    </reaction>
</comment>
<comment type="cofactor">
    <cofactor evidence="1">
        <name>[4Fe-4S] cluster</name>
        <dbReference type="ChEBI" id="CHEBI:49883"/>
    </cofactor>
    <text evidence="1">Binds 1 [4Fe-4S] cluster. The cluster is coordinated with 3 cysteines and an exchangeable S-adenosyl-L-methionine.</text>
</comment>
<comment type="cofactor">
    <cofactor evidence="1">
        <name>[2Fe-2S] cluster</name>
        <dbReference type="ChEBI" id="CHEBI:190135"/>
    </cofactor>
    <text evidence="1">Binds 1 [2Fe-2S] cluster. The cluster is coordinated with 3 cysteines and 1 arginine.</text>
</comment>
<comment type="pathway">
    <text evidence="1">Cofactor biosynthesis; biotin biosynthesis; biotin from 7,8-diaminononanoate: step 2/2.</text>
</comment>
<comment type="subunit">
    <text evidence="1">Homodimer.</text>
</comment>
<comment type="similarity">
    <text evidence="1">Belongs to the radical SAM superfamily. Biotin synthase family.</text>
</comment>
<feature type="chain" id="PRO_0000381481" description="Biotin synthase">
    <location>
        <begin position="1"/>
        <end position="344"/>
    </location>
</feature>
<feature type="domain" description="Radical SAM core" evidence="2">
    <location>
        <begin position="65"/>
        <end position="290"/>
    </location>
</feature>
<feature type="binding site" evidence="1">
    <location>
        <position position="80"/>
    </location>
    <ligand>
        <name>[4Fe-4S] cluster</name>
        <dbReference type="ChEBI" id="CHEBI:49883"/>
        <note>4Fe-4S-S-AdoMet</note>
    </ligand>
</feature>
<feature type="binding site" evidence="1">
    <location>
        <position position="84"/>
    </location>
    <ligand>
        <name>[4Fe-4S] cluster</name>
        <dbReference type="ChEBI" id="CHEBI:49883"/>
        <note>4Fe-4S-S-AdoMet</note>
    </ligand>
</feature>
<feature type="binding site" evidence="1">
    <location>
        <position position="87"/>
    </location>
    <ligand>
        <name>[4Fe-4S] cluster</name>
        <dbReference type="ChEBI" id="CHEBI:49883"/>
        <note>4Fe-4S-S-AdoMet</note>
    </ligand>
</feature>
<feature type="binding site" evidence="1">
    <location>
        <position position="123"/>
    </location>
    <ligand>
        <name>[2Fe-2S] cluster</name>
        <dbReference type="ChEBI" id="CHEBI:190135"/>
    </ligand>
</feature>
<feature type="binding site" evidence="1">
    <location>
        <position position="156"/>
    </location>
    <ligand>
        <name>[2Fe-2S] cluster</name>
        <dbReference type="ChEBI" id="CHEBI:190135"/>
    </ligand>
</feature>
<feature type="binding site" evidence="1">
    <location>
        <position position="215"/>
    </location>
    <ligand>
        <name>[2Fe-2S] cluster</name>
        <dbReference type="ChEBI" id="CHEBI:190135"/>
    </ligand>
</feature>
<feature type="binding site" evidence="1">
    <location>
        <position position="285"/>
    </location>
    <ligand>
        <name>[2Fe-2S] cluster</name>
        <dbReference type="ChEBI" id="CHEBI:190135"/>
    </ligand>
</feature>
<reference key="1">
    <citation type="journal article" date="2005" name="Proc. Natl. Acad. Sci. U.S.A.">
        <title>The complete genome sequence of Mycobacterium avium subspecies paratuberculosis.</title>
        <authorList>
            <person name="Li L."/>
            <person name="Bannantine J.P."/>
            <person name="Zhang Q."/>
            <person name="Amonsin A."/>
            <person name="May B.J."/>
            <person name="Alt D."/>
            <person name="Banerji N."/>
            <person name="Kanjilal S."/>
            <person name="Kapur V."/>
        </authorList>
    </citation>
    <scope>NUCLEOTIDE SEQUENCE [LARGE SCALE GENOMIC DNA]</scope>
    <source>
        <strain>ATCC BAA-968 / K-10</strain>
    </source>
</reference>
<organism>
    <name type="scientific">Mycolicibacterium paratuberculosis (strain ATCC BAA-968 / K-10)</name>
    <name type="common">Mycobacterium paratuberculosis</name>
    <dbReference type="NCBI Taxonomy" id="262316"/>
    <lineage>
        <taxon>Bacteria</taxon>
        <taxon>Bacillati</taxon>
        <taxon>Actinomycetota</taxon>
        <taxon>Actinomycetes</taxon>
        <taxon>Mycobacteriales</taxon>
        <taxon>Mycobacteriaceae</taxon>
        <taxon>Mycobacterium</taxon>
        <taxon>Mycobacterium avium complex (MAC)</taxon>
    </lineage>
</organism>
<gene>
    <name evidence="1" type="primary">bioB</name>
    <name type="ordered locus">MAP_1283</name>
</gene>
<accession>Q740Q9</accession>
<keyword id="KW-0001">2Fe-2S</keyword>
<keyword id="KW-0004">4Fe-4S</keyword>
<keyword id="KW-0093">Biotin biosynthesis</keyword>
<keyword id="KW-0408">Iron</keyword>
<keyword id="KW-0411">Iron-sulfur</keyword>
<keyword id="KW-0479">Metal-binding</keyword>
<keyword id="KW-1185">Reference proteome</keyword>
<keyword id="KW-0949">S-adenosyl-L-methionine</keyword>
<keyword id="KW-0808">Transferase</keyword>
<proteinExistence type="inferred from homology"/>
<protein>
    <recommendedName>
        <fullName evidence="1">Biotin synthase</fullName>
        <ecNumber evidence="1">2.8.1.6</ecNumber>
    </recommendedName>
</protein>
<dbReference type="EC" id="2.8.1.6" evidence="1"/>
<dbReference type="EMBL" id="AE016958">
    <property type="protein sequence ID" value="AAS03600.1"/>
    <property type="molecule type" value="Genomic_DNA"/>
</dbReference>
<dbReference type="RefSeq" id="WP_010949146.1">
    <property type="nucleotide sequence ID" value="NZ_CP106873.1"/>
</dbReference>
<dbReference type="SMR" id="Q740Q9"/>
<dbReference type="STRING" id="262316.MAP_1283"/>
<dbReference type="KEGG" id="mpa:MAP_1283"/>
<dbReference type="PATRIC" id="fig|262316.17.peg.1352"/>
<dbReference type="eggNOG" id="COG0502">
    <property type="taxonomic scope" value="Bacteria"/>
</dbReference>
<dbReference type="HOGENOM" id="CLU_033172_2_1_11"/>
<dbReference type="UniPathway" id="UPA00078">
    <property type="reaction ID" value="UER00162"/>
</dbReference>
<dbReference type="Proteomes" id="UP000000580">
    <property type="component" value="Chromosome"/>
</dbReference>
<dbReference type="GO" id="GO:0051537">
    <property type="term" value="F:2 iron, 2 sulfur cluster binding"/>
    <property type="evidence" value="ECO:0007669"/>
    <property type="project" value="UniProtKB-KW"/>
</dbReference>
<dbReference type="GO" id="GO:0051539">
    <property type="term" value="F:4 iron, 4 sulfur cluster binding"/>
    <property type="evidence" value="ECO:0007669"/>
    <property type="project" value="UniProtKB-KW"/>
</dbReference>
<dbReference type="GO" id="GO:0004076">
    <property type="term" value="F:biotin synthase activity"/>
    <property type="evidence" value="ECO:0007669"/>
    <property type="project" value="UniProtKB-UniRule"/>
</dbReference>
<dbReference type="GO" id="GO:0005506">
    <property type="term" value="F:iron ion binding"/>
    <property type="evidence" value="ECO:0007669"/>
    <property type="project" value="UniProtKB-UniRule"/>
</dbReference>
<dbReference type="GO" id="GO:0009102">
    <property type="term" value="P:biotin biosynthetic process"/>
    <property type="evidence" value="ECO:0007669"/>
    <property type="project" value="UniProtKB-UniRule"/>
</dbReference>
<dbReference type="CDD" id="cd01335">
    <property type="entry name" value="Radical_SAM"/>
    <property type="match status" value="1"/>
</dbReference>
<dbReference type="FunFam" id="3.20.20.70:FF:000026">
    <property type="entry name" value="Biotin synthase"/>
    <property type="match status" value="1"/>
</dbReference>
<dbReference type="Gene3D" id="3.20.20.70">
    <property type="entry name" value="Aldolase class I"/>
    <property type="match status" value="1"/>
</dbReference>
<dbReference type="HAMAP" id="MF_01694">
    <property type="entry name" value="BioB"/>
    <property type="match status" value="1"/>
</dbReference>
<dbReference type="InterPro" id="IPR013785">
    <property type="entry name" value="Aldolase_TIM"/>
</dbReference>
<dbReference type="InterPro" id="IPR010722">
    <property type="entry name" value="BATS_dom"/>
</dbReference>
<dbReference type="InterPro" id="IPR002684">
    <property type="entry name" value="Biotin_synth/BioAB"/>
</dbReference>
<dbReference type="InterPro" id="IPR024177">
    <property type="entry name" value="Biotin_synthase"/>
</dbReference>
<dbReference type="InterPro" id="IPR006638">
    <property type="entry name" value="Elp3/MiaA/NifB-like_rSAM"/>
</dbReference>
<dbReference type="InterPro" id="IPR007197">
    <property type="entry name" value="rSAM"/>
</dbReference>
<dbReference type="NCBIfam" id="TIGR00433">
    <property type="entry name" value="bioB"/>
    <property type="match status" value="1"/>
</dbReference>
<dbReference type="PANTHER" id="PTHR22976">
    <property type="entry name" value="BIOTIN SYNTHASE"/>
    <property type="match status" value="1"/>
</dbReference>
<dbReference type="PANTHER" id="PTHR22976:SF2">
    <property type="entry name" value="BIOTIN SYNTHASE, MITOCHONDRIAL"/>
    <property type="match status" value="1"/>
</dbReference>
<dbReference type="Pfam" id="PF06968">
    <property type="entry name" value="BATS"/>
    <property type="match status" value="1"/>
</dbReference>
<dbReference type="Pfam" id="PF04055">
    <property type="entry name" value="Radical_SAM"/>
    <property type="match status" value="1"/>
</dbReference>
<dbReference type="PIRSF" id="PIRSF001619">
    <property type="entry name" value="Biotin_synth"/>
    <property type="match status" value="1"/>
</dbReference>
<dbReference type="SFLD" id="SFLDG01278">
    <property type="entry name" value="biotin_synthase_like"/>
    <property type="match status" value="1"/>
</dbReference>
<dbReference type="SFLD" id="SFLDS00029">
    <property type="entry name" value="Radical_SAM"/>
    <property type="match status" value="1"/>
</dbReference>
<dbReference type="SMART" id="SM00876">
    <property type="entry name" value="BATS"/>
    <property type="match status" value="1"/>
</dbReference>
<dbReference type="SMART" id="SM00729">
    <property type="entry name" value="Elp3"/>
    <property type="match status" value="1"/>
</dbReference>
<dbReference type="SUPFAM" id="SSF102114">
    <property type="entry name" value="Radical SAM enzymes"/>
    <property type="match status" value="1"/>
</dbReference>
<dbReference type="PROSITE" id="PS51918">
    <property type="entry name" value="RADICAL_SAM"/>
    <property type="match status" value="1"/>
</dbReference>
<sequence>MTQAATRPTAEIGNEDILAVARRQVLEGGQGLSRDQVLQVLRLPDDRLDDLLALAHEVRMRWCGPEVEVEGIISLKTGGCPEDCHFCSQSGLFASPVRSARLDIPSLVEAAKQTAKSGATEFCIVAAVRGPDERLLAQVAAGIEAVRNEVEINIACSLGMLTAEQVEQLAEMGVHRYNHNLETARSFFPNVVTTHTWEERWDTLSMVRDAGMEVCCGGILGMGETLEQRAEFAAELAELGPDEVPLNFLNPRPGTPFGDLEVMPATEALKSVAAFRLALPRTMLRFAGGREITLGDLGAKKGILGGINAVIVGNYLTTLGRPAESDLELLDDLQMPLKGLNASL</sequence>